<proteinExistence type="inferred from homology"/>
<name>TLCB_RICTY</name>
<reference key="1">
    <citation type="journal article" date="2004" name="J. Bacteriol.">
        <title>Complete genome sequence of Rickettsia typhi and comparison with sequences of other Rickettsiae.</title>
        <authorList>
            <person name="McLeod M.P."/>
            <person name="Qin X."/>
            <person name="Karpathy S.E."/>
            <person name="Gioia J."/>
            <person name="Highlander S.K."/>
            <person name="Fox G.E."/>
            <person name="McNeill T.Z."/>
            <person name="Jiang H."/>
            <person name="Muzny D."/>
            <person name="Jacob L.S."/>
            <person name="Hawes A.C."/>
            <person name="Sodergren E."/>
            <person name="Gill R."/>
            <person name="Hume J."/>
            <person name="Morgan M."/>
            <person name="Fan G."/>
            <person name="Amin A.G."/>
            <person name="Gibbs R.A."/>
            <person name="Hong C."/>
            <person name="Yu X.-J."/>
            <person name="Walker D.H."/>
            <person name="Weinstock G.M."/>
        </authorList>
    </citation>
    <scope>NUCLEOTIDE SEQUENCE [LARGE SCALE GENOMIC DNA]</scope>
    <source>
        <strain>ATCC VR-144 / Wilmington</strain>
    </source>
</reference>
<gene>
    <name type="primary">tlcB</name>
    <name type="synonym">tlc2</name>
    <name type="ordered locus">RT0366</name>
</gene>
<keyword id="KW-0067">ATP-binding</keyword>
<keyword id="KW-1003">Cell membrane</keyword>
<keyword id="KW-0472">Membrane</keyword>
<keyword id="KW-0547">Nucleotide-binding</keyword>
<keyword id="KW-0812">Transmembrane</keyword>
<keyword id="KW-1133">Transmembrane helix</keyword>
<keyword id="KW-0813">Transport</keyword>
<feature type="chain" id="PRO_0000286471" description="ADP,ATP carrier protein 2">
    <location>
        <begin position="1"/>
        <end position="507"/>
    </location>
</feature>
<feature type="transmembrane region" description="Helical" evidence="2">
    <location>
        <begin position="31"/>
        <end position="51"/>
    </location>
</feature>
<feature type="transmembrane region" description="Helical" evidence="2">
    <location>
        <begin position="67"/>
        <end position="87"/>
    </location>
</feature>
<feature type="transmembrane region" description="Helical" evidence="2">
    <location>
        <begin position="99"/>
        <end position="119"/>
    </location>
</feature>
<feature type="transmembrane region" description="Helical" evidence="2">
    <location>
        <begin position="130"/>
        <end position="150"/>
    </location>
</feature>
<feature type="transmembrane region" description="Helical" evidence="2">
    <location>
        <begin position="154"/>
        <end position="174"/>
    </location>
</feature>
<feature type="transmembrane region" description="Helical" evidence="2">
    <location>
        <begin position="192"/>
        <end position="212"/>
    </location>
</feature>
<feature type="transmembrane region" description="Helical" evidence="2">
    <location>
        <begin position="231"/>
        <end position="251"/>
    </location>
</feature>
<feature type="transmembrane region" description="Helical" evidence="2">
    <location>
        <begin position="292"/>
        <end position="312"/>
    </location>
</feature>
<feature type="transmembrane region" description="Helical" evidence="2">
    <location>
        <begin position="333"/>
        <end position="353"/>
    </location>
</feature>
<feature type="transmembrane region" description="Helical" evidence="2">
    <location>
        <begin position="357"/>
        <end position="377"/>
    </location>
</feature>
<feature type="transmembrane region" description="Helical" evidence="2">
    <location>
        <begin position="393"/>
        <end position="413"/>
    </location>
</feature>
<feature type="transmembrane region" description="Helical" evidence="2">
    <location>
        <begin position="451"/>
        <end position="471"/>
    </location>
</feature>
<feature type="transmembrane region" description="Helical" evidence="2">
    <location>
        <begin position="474"/>
        <end position="494"/>
    </location>
</feature>
<sequence>MNIVDSNCTIWHKARNSKFRHIVWPIRSYELTKFIPMALLMFFILLNQNLVRSLKDSFVVTLISSEVLSFIKLWGEMPMGVLFVILYSKLCNIMTTEQVFRIITGTFLFFFTIFGFILFPYKEFFHPDPELINQYITVLPHLKWFLIIWGQWSLVLFYIMGELWPVIVFTLLYWQLANKITKVEEAPRFYSFFTLFGQTNLLFSGTVIIYFAKSEHFLLPLFAHLNDTNEILLKSFITVILLSGLICLALHKLIDKSVVEADKNIKFKNQRTDILKLSLIESAKIILTSRYLGFICLLVMSYSMSINLIEGLWMSKVKQLYPATKDFISYHGEVLFWTGVLTLVSAFLGSSLIRIYGWFWGAIITPIMMFVAGVIFFSFTIFENHLGNIVNTLGYSSPLVIIVFIGGLWHVFSKSVKYSLFDATKEMVYIPLDNEIKTKGKAAVDVIGAKIGKSIGAVIQFISFSIFPNAVHNDIAGLLMFTFIIVCILWIYGVKVLSQYNNKMIQN</sequence>
<organism>
    <name type="scientific">Rickettsia typhi (strain ATCC VR-144 / Wilmington)</name>
    <dbReference type="NCBI Taxonomy" id="257363"/>
    <lineage>
        <taxon>Bacteria</taxon>
        <taxon>Pseudomonadati</taxon>
        <taxon>Pseudomonadota</taxon>
        <taxon>Alphaproteobacteria</taxon>
        <taxon>Rickettsiales</taxon>
        <taxon>Rickettsiaceae</taxon>
        <taxon>Rickettsieae</taxon>
        <taxon>Rickettsia</taxon>
        <taxon>typhus group</taxon>
    </lineage>
</organism>
<dbReference type="EMBL" id="AE017197">
    <property type="protein sequence ID" value="AAU03845.1"/>
    <property type="molecule type" value="Genomic_DNA"/>
</dbReference>
<dbReference type="RefSeq" id="WP_011190829.1">
    <property type="nucleotide sequence ID" value="NC_006142.1"/>
</dbReference>
<dbReference type="KEGG" id="rty:RT0366"/>
<dbReference type="eggNOG" id="COG3202">
    <property type="taxonomic scope" value="Bacteria"/>
</dbReference>
<dbReference type="HOGENOM" id="CLU_023964_0_1_5"/>
<dbReference type="OrthoDB" id="19786at2"/>
<dbReference type="Proteomes" id="UP000000604">
    <property type="component" value="Chromosome"/>
</dbReference>
<dbReference type="GO" id="GO:0005886">
    <property type="term" value="C:plasma membrane"/>
    <property type="evidence" value="ECO:0007669"/>
    <property type="project" value="UniProtKB-SubCell"/>
</dbReference>
<dbReference type="GO" id="GO:0005524">
    <property type="term" value="F:ATP binding"/>
    <property type="evidence" value="ECO:0007669"/>
    <property type="project" value="UniProtKB-KW"/>
</dbReference>
<dbReference type="GO" id="GO:0005471">
    <property type="term" value="F:ATP:ADP antiporter activity"/>
    <property type="evidence" value="ECO:0007669"/>
    <property type="project" value="InterPro"/>
</dbReference>
<dbReference type="InterPro" id="IPR004667">
    <property type="entry name" value="ADP_ATP_car_bac_type"/>
</dbReference>
<dbReference type="NCBIfam" id="TIGR00769">
    <property type="entry name" value="AAA"/>
    <property type="match status" value="1"/>
</dbReference>
<dbReference type="PANTHER" id="PTHR31187">
    <property type="match status" value="1"/>
</dbReference>
<dbReference type="PANTHER" id="PTHR31187:SF1">
    <property type="entry name" value="ADP,ATP CARRIER PROTEIN 1"/>
    <property type="match status" value="1"/>
</dbReference>
<dbReference type="Pfam" id="PF03219">
    <property type="entry name" value="TLC"/>
    <property type="match status" value="1"/>
</dbReference>
<accession>Q68WZ7</accession>
<comment type="function">
    <text evidence="1">Provides the rickettsial cell with host ATP in exchange for rickettsial ADP. This is an obligate exchange system. This energy acquiring activity is an important component of rickettsial parasitism (By similarity).</text>
</comment>
<comment type="subcellular location">
    <subcellularLocation>
        <location>Cell membrane</location>
        <topology>Multi-pass membrane protein</topology>
    </subcellularLocation>
</comment>
<comment type="similarity">
    <text evidence="3">Belongs to the ADP/ATP translocase tlc family.</text>
</comment>
<evidence type="ECO:0000250" key="1"/>
<evidence type="ECO:0000255" key="2"/>
<evidence type="ECO:0000305" key="3"/>
<protein>
    <recommendedName>
        <fullName>ADP,ATP carrier protein 2</fullName>
    </recommendedName>
    <alternativeName>
        <fullName>ADP/ATP translocase 2</fullName>
    </alternativeName>
</protein>